<name>ALMS1_DROME</name>
<organism evidence="7">
    <name type="scientific">Drosophila melanogaster</name>
    <name type="common">Fruit fly</name>
    <dbReference type="NCBI Taxonomy" id="7227"/>
    <lineage>
        <taxon>Eukaryota</taxon>
        <taxon>Metazoa</taxon>
        <taxon>Ecdysozoa</taxon>
        <taxon>Arthropoda</taxon>
        <taxon>Hexapoda</taxon>
        <taxon>Insecta</taxon>
        <taxon>Pterygota</taxon>
        <taxon>Neoptera</taxon>
        <taxon>Endopterygota</taxon>
        <taxon>Diptera</taxon>
        <taxon>Brachycera</taxon>
        <taxon>Muscomorpha</taxon>
        <taxon>Ephydroidea</taxon>
        <taxon>Drosophilidae</taxon>
        <taxon>Drosophila</taxon>
        <taxon>Sophophora</taxon>
    </lineage>
</organism>
<proteinExistence type="evidence at protein level"/>
<keyword id="KW-0963">Cytoplasm</keyword>
<keyword id="KW-0206">Cytoskeleton</keyword>
<keyword id="KW-1185">Reference proteome</keyword>
<dbReference type="EMBL" id="AE014298">
    <property type="protein sequence ID" value="AAF45962.4"/>
    <property type="molecule type" value="Genomic_DNA"/>
</dbReference>
<dbReference type="EMBL" id="AE014298">
    <property type="protein sequence ID" value="AAF45963.4"/>
    <property type="molecule type" value="Genomic_DNA"/>
</dbReference>
<dbReference type="EMBL" id="BT021393">
    <property type="protein sequence ID" value="AAX33541.1"/>
    <property type="molecule type" value="mRNA"/>
</dbReference>
<dbReference type="EMBL" id="BT033060">
    <property type="protein sequence ID" value="ACE82583.1"/>
    <property type="molecule type" value="mRNA"/>
</dbReference>
<dbReference type="RefSeq" id="NP_572175.3">
    <property type="nucleotide sequence ID" value="NM_131947.4"/>
</dbReference>
<dbReference type="RefSeq" id="NP_726937.3">
    <property type="nucleotide sequence ID" value="NM_167011.4"/>
</dbReference>
<dbReference type="SMR" id="Q5BI31"/>
<dbReference type="FunCoup" id="Q5BI31">
    <property type="interactions" value="34"/>
</dbReference>
<dbReference type="IntAct" id="Q5BI31">
    <property type="interactions" value="5"/>
</dbReference>
<dbReference type="STRING" id="7227.FBpp0289979"/>
<dbReference type="GlyGen" id="Q5BI31">
    <property type="glycosylation" value="1 site"/>
</dbReference>
<dbReference type="PaxDb" id="7227-FBpp0289979"/>
<dbReference type="EnsemblMetazoa" id="FBtr0300754">
    <property type="protein sequence ID" value="FBpp0289978"/>
    <property type="gene ID" value="FBgn0025388"/>
</dbReference>
<dbReference type="EnsemblMetazoa" id="FBtr0300755">
    <property type="protein sequence ID" value="FBpp0289979"/>
    <property type="gene ID" value="FBgn0025388"/>
</dbReference>
<dbReference type="GeneID" id="31393"/>
<dbReference type="KEGG" id="dme:Dmel_CG12179"/>
<dbReference type="UCSC" id="CG12179-RA">
    <property type="organism name" value="d. melanogaster"/>
</dbReference>
<dbReference type="UCSC" id="CG12179-RB">
    <property type="organism name" value="d. melanogaster"/>
</dbReference>
<dbReference type="AGR" id="FB:FBgn0025388"/>
<dbReference type="CTD" id="31393"/>
<dbReference type="FlyBase" id="FBgn0025388">
    <property type="gene designation" value="Alms1a"/>
</dbReference>
<dbReference type="VEuPathDB" id="VectorBase:FBgn0025388"/>
<dbReference type="eggNOG" id="ENOG502SFA4">
    <property type="taxonomic scope" value="Eukaryota"/>
</dbReference>
<dbReference type="GeneTree" id="ENSGT00540000073831"/>
<dbReference type="HOGENOM" id="CLU_009110_0_0_1"/>
<dbReference type="InParanoid" id="Q5BI31"/>
<dbReference type="OMA" id="GMVNTCE"/>
<dbReference type="OrthoDB" id="2448405at2759"/>
<dbReference type="PhylomeDB" id="Q5BI31"/>
<dbReference type="BioGRID-ORCS" id="31393">
    <property type="hits" value="0 hits in 1 CRISPR screen"/>
</dbReference>
<dbReference type="ChiTaRS" id="CG12179">
    <property type="organism name" value="fly"/>
</dbReference>
<dbReference type="GenomeRNAi" id="31393"/>
<dbReference type="PRO" id="PR:Q5BI31"/>
<dbReference type="Proteomes" id="UP000000803">
    <property type="component" value="Chromosome X"/>
</dbReference>
<dbReference type="Bgee" id="FBgn0025388">
    <property type="expression patterns" value="Expressed in spermatocyte in testis and 49 other cell types or tissues"/>
</dbReference>
<dbReference type="ExpressionAtlas" id="Q5BI31">
    <property type="expression patterns" value="baseline and differential"/>
</dbReference>
<dbReference type="GO" id="GO:0005814">
    <property type="term" value="C:centriole"/>
    <property type="evidence" value="ECO:0007669"/>
    <property type="project" value="UniProtKB-SubCell"/>
</dbReference>
<dbReference type="GO" id="GO:0005813">
    <property type="term" value="C:centrosome"/>
    <property type="evidence" value="ECO:0007669"/>
    <property type="project" value="UniProtKB-SubCell"/>
</dbReference>
<dbReference type="GO" id="GO:0005737">
    <property type="term" value="C:cytoplasm"/>
    <property type="evidence" value="ECO:0007669"/>
    <property type="project" value="UniProtKB-KW"/>
</dbReference>
<dbReference type="GO" id="GO:0019900">
    <property type="term" value="F:kinase binding"/>
    <property type="evidence" value="ECO:0000353"/>
    <property type="project" value="FlyBase"/>
</dbReference>
<dbReference type="GO" id="GO:0019894">
    <property type="term" value="F:kinesin binding"/>
    <property type="evidence" value="ECO:0000353"/>
    <property type="project" value="FlyBase"/>
</dbReference>
<dbReference type="GO" id="GO:0048133">
    <property type="term" value="P:male germ-line stem cell asymmetric division"/>
    <property type="evidence" value="ECO:0000315"/>
    <property type="project" value="FlyBase"/>
</dbReference>
<dbReference type="GO" id="GO:0046601">
    <property type="term" value="P:positive regulation of centriole replication"/>
    <property type="evidence" value="ECO:0000316"/>
    <property type="project" value="FlyBase"/>
</dbReference>
<dbReference type="GO" id="GO:0010825">
    <property type="term" value="P:positive regulation of centrosome duplication"/>
    <property type="evidence" value="ECO:0000315"/>
    <property type="project" value="FlyBase"/>
</dbReference>
<dbReference type="InterPro" id="IPR029299">
    <property type="entry name" value="ALMS_motif"/>
</dbReference>
<dbReference type="Pfam" id="PF15309">
    <property type="entry name" value="ALMS_motif"/>
    <property type="match status" value="1"/>
</dbReference>
<reference evidence="7" key="1">
    <citation type="journal article" date="2000" name="Science">
        <title>The genome sequence of Drosophila melanogaster.</title>
        <authorList>
            <person name="Adams M.D."/>
            <person name="Celniker S.E."/>
            <person name="Holt R.A."/>
            <person name="Evans C.A."/>
            <person name="Gocayne J.D."/>
            <person name="Amanatides P.G."/>
            <person name="Scherer S.E."/>
            <person name="Li P.W."/>
            <person name="Hoskins R.A."/>
            <person name="Galle R.F."/>
            <person name="George R.A."/>
            <person name="Lewis S.E."/>
            <person name="Richards S."/>
            <person name="Ashburner M."/>
            <person name="Henderson S.N."/>
            <person name="Sutton G.G."/>
            <person name="Wortman J.R."/>
            <person name="Yandell M.D."/>
            <person name="Zhang Q."/>
            <person name="Chen L.X."/>
            <person name="Brandon R.C."/>
            <person name="Rogers Y.-H.C."/>
            <person name="Blazej R.G."/>
            <person name="Champe M."/>
            <person name="Pfeiffer B.D."/>
            <person name="Wan K.H."/>
            <person name="Doyle C."/>
            <person name="Baxter E.G."/>
            <person name="Helt G."/>
            <person name="Nelson C.R."/>
            <person name="Miklos G.L.G."/>
            <person name="Abril J.F."/>
            <person name="Agbayani A."/>
            <person name="An H.-J."/>
            <person name="Andrews-Pfannkoch C."/>
            <person name="Baldwin D."/>
            <person name="Ballew R.M."/>
            <person name="Basu A."/>
            <person name="Baxendale J."/>
            <person name="Bayraktaroglu L."/>
            <person name="Beasley E.M."/>
            <person name="Beeson K.Y."/>
            <person name="Benos P.V."/>
            <person name="Berman B.P."/>
            <person name="Bhandari D."/>
            <person name="Bolshakov S."/>
            <person name="Borkova D."/>
            <person name="Botchan M.R."/>
            <person name="Bouck J."/>
            <person name="Brokstein P."/>
            <person name="Brottier P."/>
            <person name="Burtis K.C."/>
            <person name="Busam D.A."/>
            <person name="Butler H."/>
            <person name="Cadieu E."/>
            <person name="Center A."/>
            <person name="Chandra I."/>
            <person name="Cherry J.M."/>
            <person name="Cawley S."/>
            <person name="Dahlke C."/>
            <person name="Davenport L.B."/>
            <person name="Davies P."/>
            <person name="de Pablos B."/>
            <person name="Delcher A."/>
            <person name="Deng Z."/>
            <person name="Mays A.D."/>
            <person name="Dew I."/>
            <person name="Dietz S.M."/>
            <person name="Dodson K."/>
            <person name="Doup L.E."/>
            <person name="Downes M."/>
            <person name="Dugan-Rocha S."/>
            <person name="Dunkov B.C."/>
            <person name="Dunn P."/>
            <person name="Durbin K.J."/>
            <person name="Evangelista C.C."/>
            <person name="Ferraz C."/>
            <person name="Ferriera S."/>
            <person name="Fleischmann W."/>
            <person name="Fosler C."/>
            <person name="Gabrielian A.E."/>
            <person name="Garg N.S."/>
            <person name="Gelbart W.M."/>
            <person name="Glasser K."/>
            <person name="Glodek A."/>
            <person name="Gong F."/>
            <person name="Gorrell J.H."/>
            <person name="Gu Z."/>
            <person name="Guan P."/>
            <person name="Harris M."/>
            <person name="Harris N.L."/>
            <person name="Harvey D.A."/>
            <person name="Heiman T.J."/>
            <person name="Hernandez J.R."/>
            <person name="Houck J."/>
            <person name="Hostin D."/>
            <person name="Houston K.A."/>
            <person name="Howland T.J."/>
            <person name="Wei M.-H."/>
            <person name="Ibegwam C."/>
            <person name="Jalali M."/>
            <person name="Kalush F."/>
            <person name="Karpen G.H."/>
            <person name="Ke Z."/>
            <person name="Kennison J.A."/>
            <person name="Ketchum K.A."/>
            <person name="Kimmel B.E."/>
            <person name="Kodira C.D."/>
            <person name="Kraft C.L."/>
            <person name="Kravitz S."/>
            <person name="Kulp D."/>
            <person name="Lai Z."/>
            <person name="Lasko P."/>
            <person name="Lei Y."/>
            <person name="Levitsky A.A."/>
            <person name="Li J.H."/>
            <person name="Li Z."/>
            <person name="Liang Y."/>
            <person name="Lin X."/>
            <person name="Liu X."/>
            <person name="Mattei B."/>
            <person name="McIntosh T.C."/>
            <person name="McLeod M.P."/>
            <person name="McPherson D."/>
            <person name="Merkulov G."/>
            <person name="Milshina N.V."/>
            <person name="Mobarry C."/>
            <person name="Morris J."/>
            <person name="Moshrefi A."/>
            <person name="Mount S.M."/>
            <person name="Moy M."/>
            <person name="Murphy B."/>
            <person name="Murphy L."/>
            <person name="Muzny D.M."/>
            <person name="Nelson D.L."/>
            <person name="Nelson D.R."/>
            <person name="Nelson K.A."/>
            <person name="Nixon K."/>
            <person name="Nusskern D.R."/>
            <person name="Pacleb J.M."/>
            <person name="Palazzolo M."/>
            <person name="Pittman G.S."/>
            <person name="Pan S."/>
            <person name="Pollard J."/>
            <person name="Puri V."/>
            <person name="Reese M.G."/>
            <person name="Reinert K."/>
            <person name="Remington K."/>
            <person name="Saunders R.D.C."/>
            <person name="Scheeler F."/>
            <person name="Shen H."/>
            <person name="Shue B.C."/>
            <person name="Siden-Kiamos I."/>
            <person name="Simpson M."/>
            <person name="Skupski M.P."/>
            <person name="Smith T.J."/>
            <person name="Spier E."/>
            <person name="Spradling A.C."/>
            <person name="Stapleton M."/>
            <person name="Strong R."/>
            <person name="Sun E."/>
            <person name="Svirskas R."/>
            <person name="Tector C."/>
            <person name="Turner R."/>
            <person name="Venter E."/>
            <person name="Wang A.H."/>
            <person name="Wang X."/>
            <person name="Wang Z.-Y."/>
            <person name="Wassarman D.A."/>
            <person name="Weinstock G.M."/>
            <person name="Weissenbach J."/>
            <person name="Williams S.M."/>
            <person name="Woodage T."/>
            <person name="Worley K.C."/>
            <person name="Wu D."/>
            <person name="Yang S."/>
            <person name="Yao Q.A."/>
            <person name="Ye J."/>
            <person name="Yeh R.-F."/>
            <person name="Zaveri J.S."/>
            <person name="Zhan M."/>
            <person name="Zhang G."/>
            <person name="Zhao Q."/>
            <person name="Zheng L."/>
            <person name="Zheng X.H."/>
            <person name="Zhong F.N."/>
            <person name="Zhong W."/>
            <person name="Zhou X."/>
            <person name="Zhu S.C."/>
            <person name="Zhu X."/>
            <person name="Smith H.O."/>
            <person name="Gibbs R.A."/>
            <person name="Myers E.W."/>
            <person name="Rubin G.M."/>
            <person name="Venter J.C."/>
        </authorList>
    </citation>
    <scope>NUCLEOTIDE SEQUENCE [LARGE SCALE GENOMIC DNA]</scope>
    <source>
        <strain evidence="7">Berkeley</strain>
    </source>
</reference>
<reference evidence="7" key="2">
    <citation type="journal article" date="2002" name="Genome Biol.">
        <title>Annotation of the Drosophila melanogaster euchromatic genome: a systematic review.</title>
        <authorList>
            <person name="Misra S."/>
            <person name="Crosby M.A."/>
            <person name="Mungall C.J."/>
            <person name="Matthews B.B."/>
            <person name="Campbell K.S."/>
            <person name="Hradecky P."/>
            <person name="Huang Y."/>
            <person name="Kaminker J.S."/>
            <person name="Millburn G.H."/>
            <person name="Prochnik S.E."/>
            <person name="Smith C.D."/>
            <person name="Tupy J.L."/>
            <person name="Whitfield E.J."/>
            <person name="Bayraktaroglu L."/>
            <person name="Berman B.P."/>
            <person name="Bettencourt B.R."/>
            <person name="Celniker S.E."/>
            <person name="de Grey A.D.N.J."/>
            <person name="Drysdale R.A."/>
            <person name="Harris N.L."/>
            <person name="Richter J."/>
            <person name="Russo S."/>
            <person name="Schroeder A.J."/>
            <person name="Shu S.Q."/>
            <person name="Stapleton M."/>
            <person name="Yamada C."/>
            <person name="Ashburner M."/>
            <person name="Gelbart W.M."/>
            <person name="Rubin G.M."/>
            <person name="Lewis S.E."/>
        </authorList>
    </citation>
    <scope>GENOME REANNOTATION</scope>
    <source>
        <strain evidence="7">Berkeley</strain>
    </source>
</reference>
<reference evidence="4 5" key="3">
    <citation type="submission" date="2008-06" db="EMBL/GenBank/DDBJ databases">
        <authorList>
            <person name="Booth B."/>
            <person name="Carlson J."/>
            <person name="Celniker S."/>
            <person name="Chavez C."/>
            <person name="Frise E."/>
            <person name="George R."/>
            <person name="Pacleb J."/>
            <person name="Park S."/>
            <person name="Rubin G.M."/>
            <person name="Wan K."/>
            <person name="Yu C."/>
            <person name="Stapleton M."/>
        </authorList>
    </citation>
    <scope>NUCLEOTIDE SEQUENCE [LARGE SCALE MRNA]</scope>
    <source>
        <strain evidence="4 5">Berkeley</strain>
    </source>
</reference>
<reference evidence="3" key="4">
    <citation type="journal article" date="2020" name="Elife">
        <title>Alstrom syndrome gene is a stem-cell-specific regulator of centriole duplication in the Drosophila testis.</title>
        <authorList>
            <person name="Chen C."/>
            <person name="Yamashita Y.M."/>
        </authorList>
    </citation>
    <scope>FUNCTION</scope>
    <scope>INTERACTION WITH KLP10A AND SAK</scope>
    <scope>SUBCELLULAR LOCATION</scope>
    <scope>TISSUE SPECIFICITY</scope>
    <scope>DISRUPTION PHENOTYPE</scope>
</reference>
<sequence length="1322" mass="148123">MRAKRGAVGKVMMSGSRHNKLAESSRVPPLAREYISAMATDRELDRFMALSSTASSGASGSTHSCALGSVPPPGCASMEHESRPESGHRRRTKSSDHRSPDERGEAKEQLRELSVSPPPSKHKISQFTSPKSEVTKTKPNEYTIIPIVLASSPSFRSVAVTQTMSQSAEDIRTPTKSPQMQNKKTQTPESVLKSHKRLEWDPSADVGYCKRAMSMSNISTLERSVLEDCSWRQPTQQRPEANLDGVQPLLAEEPSPMLDKPTPPLACSTFVNRSERTKSLNSGMESSLSSNKGDPRKKCQRKSRRQDSEVSSCQTDCRSSSQKESTQGSSEAKDIRGNFTTEGTQCSYNRNDTEIDSIMEEEESIDRRKKDDLRISSRVQDPQISSRRPSVSSSRRESLSSYRRDDSRLNSPNSSRLGSEVSSRVESSRSSSRRESQTNSVYGSLSASSFDYHMHMAQEVEVLKHNQRRQQEMEVEPKKQLEKEQHQNDMQQGEPKGRELKDKNHHSGREQQEIQPLMRDQRKAEQRHEKDHQLEREQQGIQQLSKGQRKAKKREKEREQERQYTAAQFEKIRSNRRHVNKENQKPENPVVNPSTGVTASTSTTSLDVGSGSRPGGELDLGIDLLCSLVKSRSLSQGQKKKLVRDIARRISCLELTESSTSSRSLSSSSKEQLKVPTGSLQQVAATNTNQSNARSSSKAERIAPPVPAPRKRAAIGSSSPLPESVSYSGSTSGSGEVITQKTNIPNRNASTDADIEPLDLQDWLNPMTLSEIEFEERLKGGTDSERRRQLHWVKTEINRMQEFKNLLENISLPSKSQKKANTESATAAQIPSSMRCMGDQKERPDKEYLLRQEMSAEAESKEMENSETTTTPPPPVRIESVGVNVTNSDPSTLPAPPPTQPPPPPPHLNQRNLQNRKKMATPLLVSGSSTSGGGRSESVCSFVQQRQRQFREHYQNQQQQQFVLLQQQKLYQLQKQLNQQKDILIQRQQHCGQCAQCGHQRTCIHQQNCPRRQQEAEEQPDEREQYMQMQYAQAAGSAYATPHQSGSSGADKNEAIYYQVVNSQGVASYVQATMVSTETQNEASATGGAGGSAITRSTTTTTNSSSSMMCISSDMSVPMGMMNTCETTTTTTTHQYDDVACQRVRRGHKETTMNAESMQRQTLQVRPRAISYVIQFTPTGSSEVIEKPPSLQDQLQLARPEFCANAKQRKAILNEMQMIRNARRQELDNVLSQSTSMEALNRHLEQLPPPANTRVRLFTTREMKAITSKRCKNLPEVLAAQSRQEEEQRRRSNRLMRDVFNKRLKSRVASGQISLNHSMAIM</sequence>
<feature type="chain" id="PRO_0000451954" description="Centrosome-associated protein Alms1a" evidence="3">
    <location>
        <begin position="1"/>
        <end position="1322"/>
    </location>
</feature>
<feature type="region of interest" description="Disordered" evidence="1">
    <location>
        <begin position="1"/>
        <end position="26"/>
    </location>
</feature>
<feature type="region of interest" description="Disordered" evidence="1">
    <location>
        <begin position="53"/>
        <end position="135"/>
    </location>
</feature>
<feature type="region of interest" description="Disordered" evidence="1">
    <location>
        <begin position="165"/>
        <end position="193"/>
    </location>
</feature>
<feature type="region of interest" description="Disordered" evidence="1">
    <location>
        <begin position="252"/>
        <end position="442"/>
    </location>
</feature>
<feature type="region of interest" description="Disordered" evidence="1">
    <location>
        <begin position="464"/>
        <end position="614"/>
    </location>
</feature>
<feature type="region of interest" description="Disordered" evidence="1">
    <location>
        <begin position="657"/>
        <end position="752"/>
    </location>
</feature>
<feature type="region of interest" description="Disordered" evidence="1">
    <location>
        <begin position="814"/>
        <end position="844"/>
    </location>
</feature>
<feature type="region of interest" description="Disordered" evidence="1">
    <location>
        <begin position="856"/>
        <end position="911"/>
    </location>
</feature>
<feature type="region of interest" description="Disordered" evidence="1">
    <location>
        <begin position="1083"/>
        <end position="1109"/>
    </location>
</feature>
<feature type="region of interest" description="Interaction with Klp10A" evidence="2">
    <location>
        <begin position="1115"/>
        <end position="1322"/>
    </location>
</feature>
<feature type="region of interest" description="ALMS motif" evidence="3">
    <location>
        <begin position="1190"/>
        <end position="1309"/>
    </location>
</feature>
<feature type="compositionally biased region" description="Low complexity" evidence="1">
    <location>
        <begin position="53"/>
        <end position="62"/>
    </location>
</feature>
<feature type="compositionally biased region" description="Basic and acidic residues" evidence="1">
    <location>
        <begin position="78"/>
        <end position="111"/>
    </location>
</feature>
<feature type="compositionally biased region" description="Polar residues" evidence="1">
    <location>
        <begin position="165"/>
        <end position="189"/>
    </location>
</feature>
<feature type="compositionally biased region" description="Low complexity" evidence="1">
    <location>
        <begin position="279"/>
        <end position="292"/>
    </location>
</feature>
<feature type="compositionally biased region" description="Polar residues" evidence="1">
    <location>
        <begin position="309"/>
        <end position="318"/>
    </location>
</feature>
<feature type="compositionally biased region" description="Low complexity" evidence="1">
    <location>
        <begin position="319"/>
        <end position="330"/>
    </location>
</feature>
<feature type="compositionally biased region" description="Polar residues" evidence="1">
    <location>
        <begin position="338"/>
        <end position="350"/>
    </location>
</feature>
<feature type="compositionally biased region" description="Acidic residues" evidence="1">
    <location>
        <begin position="354"/>
        <end position="364"/>
    </location>
</feature>
<feature type="compositionally biased region" description="Basic and acidic residues" evidence="1">
    <location>
        <begin position="365"/>
        <end position="375"/>
    </location>
</feature>
<feature type="compositionally biased region" description="Basic and acidic residues" evidence="1">
    <location>
        <begin position="394"/>
        <end position="408"/>
    </location>
</feature>
<feature type="compositionally biased region" description="Low complexity" evidence="1">
    <location>
        <begin position="409"/>
        <end position="430"/>
    </location>
</feature>
<feature type="compositionally biased region" description="Basic and acidic residues" evidence="1">
    <location>
        <begin position="464"/>
        <end position="487"/>
    </location>
</feature>
<feature type="compositionally biased region" description="Basic and acidic residues" evidence="1">
    <location>
        <begin position="495"/>
        <end position="512"/>
    </location>
</feature>
<feature type="compositionally biased region" description="Basic and acidic residues" evidence="1">
    <location>
        <begin position="519"/>
        <end position="538"/>
    </location>
</feature>
<feature type="compositionally biased region" description="Low complexity" evidence="1">
    <location>
        <begin position="594"/>
        <end position="605"/>
    </location>
</feature>
<feature type="compositionally biased region" description="Low complexity" evidence="1">
    <location>
        <begin position="657"/>
        <end position="669"/>
    </location>
</feature>
<feature type="compositionally biased region" description="Polar residues" evidence="1">
    <location>
        <begin position="678"/>
        <end position="696"/>
    </location>
</feature>
<feature type="compositionally biased region" description="Low complexity" evidence="1">
    <location>
        <begin position="714"/>
        <end position="735"/>
    </location>
</feature>
<feature type="compositionally biased region" description="Polar residues" evidence="1">
    <location>
        <begin position="737"/>
        <end position="751"/>
    </location>
</feature>
<feature type="compositionally biased region" description="Polar residues" evidence="1">
    <location>
        <begin position="822"/>
        <end position="832"/>
    </location>
</feature>
<feature type="compositionally biased region" description="Pro residues" evidence="1">
    <location>
        <begin position="893"/>
        <end position="907"/>
    </location>
</feature>
<feature type="compositionally biased region" description="Low complexity" evidence="1">
    <location>
        <begin position="1092"/>
        <end position="1107"/>
    </location>
</feature>
<gene>
    <name evidence="6" type="primary">Alms1a</name>
    <name evidence="6" type="synonym">EG:66A1.2</name>
    <name evidence="6" type="ORF">CG12179</name>
</gene>
<evidence type="ECO:0000256" key="1">
    <source>
        <dbReference type="SAM" id="MobiDB-lite"/>
    </source>
</evidence>
<evidence type="ECO:0000269" key="2">
    <source>
    </source>
</evidence>
<evidence type="ECO:0000305" key="3"/>
<evidence type="ECO:0000312" key="4">
    <source>
        <dbReference type="EMBL" id="AAX33541.1"/>
    </source>
</evidence>
<evidence type="ECO:0000312" key="5">
    <source>
        <dbReference type="EMBL" id="ACE82583.1"/>
    </source>
</evidence>
<evidence type="ECO:0000312" key="6">
    <source>
        <dbReference type="FlyBase" id="FBgn0025388"/>
    </source>
</evidence>
<evidence type="ECO:0000312" key="7">
    <source>
        <dbReference type="Proteomes" id="UP000000803"/>
    </source>
</evidence>
<comment type="function">
    <text evidence="2">In asymmetrically dividing germline stem cells (GSCs), plays a critical role in ensuring centrosome duplication, which is essential for the production of centrosomes and centrioles in all downstream germ cells (PubMed:32965218). Might recruit SAK for daughter centriole duplication (PubMed:32965218).</text>
</comment>
<comment type="subunit">
    <text evidence="2">Interacts (via C-terminus) with Klp10A (PubMed:32965218). Interacts with SAK (PubMed:32965218).</text>
</comment>
<comment type="subcellular location">
    <subcellularLocation>
        <location evidence="2">Cytoplasm</location>
        <location evidence="2">Cytoskeleton</location>
        <location evidence="2">Microtubule organizing center</location>
        <location evidence="2">Centrosome</location>
    </subcellularLocation>
    <subcellularLocation>
        <location evidence="2">Cytoplasm</location>
        <location evidence="2">Cytoskeleton</location>
        <location evidence="2">Microtubule organizing center</location>
        <location evidence="2">Centrosome</location>
        <location evidence="2">Centriole</location>
    </subcellularLocation>
    <text evidence="2">In male germline stem cells, gonialblasts and spermatogonia, localizes to the proximal end of the mother centrioles (PubMed:32965218). Only in male germ stem cells (GSCs), localizes asymmetrically to the mother centrosomes and within it with higher levels at both mother and daughter centrioles (PubMed:32965218). Colocalizes with SAK at the mother centrosome in GSCs (PubMed:32965218).</text>
</comment>
<comment type="tissue specificity">
    <text evidence="2">Expressed in all germlines, including germline stem cells and spermatogonia.</text>
</comment>
<comment type="disruption phenotype">
    <text evidence="2">RNAi-mediated knockdown in asymmetrically dividing male germline stem cells (GSCs), results in loss of centriole duplication and thereby leads to complete loss of centrosomes (and centrioles) from all male germ cells (PubMed:32965218). In GSCs, results in the enrichment of both SAK and Sas-6 at the remaining elongated mother centrioles (PubMed:32965218). Does not change Klp10A centrosome localization in male germline stem cells (PubMed:32965218). RNAi-mediated knockdown in symmetrically dividing spermatogonia, does not affect normal centrosome duplication (PubMed:32965218).</text>
</comment>
<comment type="similarity">
    <text evidence="3">Belongs to the ALMS1 family.</text>
</comment>
<protein>
    <recommendedName>
        <fullName evidence="3">Centrosome-associated protein Alms1a</fullName>
    </recommendedName>
    <alternativeName>
        <fullName evidence="3">Alstrom syndrome protein 1 homolog a</fullName>
    </alternativeName>
</protein>
<accession>Q5BI31</accession>
<accession>Q9W4I8</accession>
<accession>Q9W4I9</accession>